<keyword id="KW-0997">Cell inner membrane</keyword>
<keyword id="KW-1003">Cell membrane</keyword>
<keyword id="KW-0143">Chaperone</keyword>
<keyword id="KW-0472">Membrane</keyword>
<keyword id="KW-0653">Protein transport</keyword>
<keyword id="KW-0812">Transmembrane</keyword>
<keyword id="KW-1133">Transmembrane helix</keyword>
<keyword id="KW-0813">Transport</keyword>
<proteinExistence type="inferred from homology"/>
<dbReference type="EMBL" id="CP000644">
    <property type="protein sequence ID" value="ABO92297.1"/>
    <property type="molecule type" value="Genomic_DNA"/>
</dbReference>
<dbReference type="RefSeq" id="WP_005319558.1">
    <property type="nucleotide sequence ID" value="NC_009348.1"/>
</dbReference>
<dbReference type="SMR" id="A4STS5"/>
<dbReference type="STRING" id="29491.GCA_000820065_00559"/>
<dbReference type="KEGG" id="asa:ASA_4382"/>
<dbReference type="PATRIC" id="fig|382245.13.peg.4340"/>
<dbReference type="eggNOG" id="COG0706">
    <property type="taxonomic scope" value="Bacteria"/>
</dbReference>
<dbReference type="HOGENOM" id="CLU_016535_3_0_6"/>
<dbReference type="Proteomes" id="UP000000225">
    <property type="component" value="Chromosome"/>
</dbReference>
<dbReference type="GO" id="GO:0005886">
    <property type="term" value="C:plasma membrane"/>
    <property type="evidence" value="ECO:0007669"/>
    <property type="project" value="UniProtKB-SubCell"/>
</dbReference>
<dbReference type="GO" id="GO:0032977">
    <property type="term" value="F:membrane insertase activity"/>
    <property type="evidence" value="ECO:0007669"/>
    <property type="project" value="InterPro"/>
</dbReference>
<dbReference type="GO" id="GO:0051205">
    <property type="term" value="P:protein insertion into membrane"/>
    <property type="evidence" value="ECO:0007669"/>
    <property type="project" value="TreeGrafter"/>
</dbReference>
<dbReference type="GO" id="GO:0015031">
    <property type="term" value="P:protein transport"/>
    <property type="evidence" value="ECO:0007669"/>
    <property type="project" value="UniProtKB-KW"/>
</dbReference>
<dbReference type="CDD" id="cd20070">
    <property type="entry name" value="5TM_YidC_Alb3"/>
    <property type="match status" value="1"/>
</dbReference>
<dbReference type="CDD" id="cd19961">
    <property type="entry name" value="EcYidC-like_peri"/>
    <property type="match status" value="1"/>
</dbReference>
<dbReference type="Gene3D" id="2.70.98.90">
    <property type="match status" value="1"/>
</dbReference>
<dbReference type="HAMAP" id="MF_01810">
    <property type="entry name" value="YidC_type1"/>
    <property type="match status" value="1"/>
</dbReference>
<dbReference type="InterPro" id="IPR019998">
    <property type="entry name" value="Membr_insert_YidC"/>
</dbReference>
<dbReference type="InterPro" id="IPR028053">
    <property type="entry name" value="Membr_insert_YidC_N"/>
</dbReference>
<dbReference type="InterPro" id="IPR001708">
    <property type="entry name" value="YidC/ALB3/OXA1/COX18"/>
</dbReference>
<dbReference type="InterPro" id="IPR028055">
    <property type="entry name" value="YidC/Oxa/ALB_C"/>
</dbReference>
<dbReference type="InterPro" id="IPR047196">
    <property type="entry name" value="YidC_ALB_C"/>
</dbReference>
<dbReference type="InterPro" id="IPR038221">
    <property type="entry name" value="YidC_periplasmic_sf"/>
</dbReference>
<dbReference type="NCBIfam" id="NF002351">
    <property type="entry name" value="PRK01318.1-1"/>
    <property type="match status" value="1"/>
</dbReference>
<dbReference type="NCBIfam" id="NF002352">
    <property type="entry name" value="PRK01318.1-3"/>
    <property type="match status" value="1"/>
</dbReference>
<dbReference type="NCBIfam" id="NF002353">
    <property type="entry name" value="PRK01318.1-4"/>
    <property type="match status" value="1"/>
</dbReference>
<dbReference type="NCBIfam" id="TIGR03593">
    <property type="entry name" value="yidC_nterm"/>
    <property type="match status" value="1"/>
</dbReference>
<dbReference type="NCBIfam" id="TIGR03592">
    <property type="entry name" value="yidC_oxa1_cterm"/>
    <property type="match status" value="1"/>
</dbReference>
<dbReference type="PANTHER" id="PTHR12428:SF65">
    <property type="entry name" value="CYTOCHROME C OXIDASE ASSEMBLY PROTEIN COX18, MITOCHONDRIAL"/>
    <property type="match status" value="1"/>
</dbReference>
<dbReference type="PANTHER" id="PTHR12428">
    <property type="entry name" value="OXA1"/>
    <property type="match status" value="1"/>
</dbReference>
<dbReference type="Pfam" id="PF02096">
    <property type="entry name" value="60KD_IMP"/>
    <property type="match status" value="1"/>
</dbReference>
<dbReference type="Pfam" id="PF14849">
    <property type="entry name" value="YidC_periplas"/>
    <property type="match status" value="1"/>
</dbReference>
<dbReference type="PRINTS" id="PR00701">
    <property type="entry name" value="60KDINNERMP"/>
</dbReference>
<dbReference type="PRINTS" id="PR01900">
    <property type="entry name" value="YIDCPROTEIN"/>
</dbReference>
<comment type="function">
    <text evidence="1">Required for the insertion and/or proper folding and/or complex formation of integral membrane proteins into the membrane. Involved in integration of membrane proteins that insert both dependently and independently of the Sec translocase complex, as well as at least some lipoproteins. Aids folding of multispanning membrane proteins.</text>
</comment>
<comment type="subunit">
    <text evidence="1">Interacts with the Sec translocase complex via SecD. Specifically interacts with transmembrane segments of nascent integral membrane proteins during membrane integration.</text>
</comment>
<comment type="subcellular location">
    <subcellularLocation>
        <location evidence="1">Cell inner membrane</location>
        <topology evidence="1">Multi-pass membrane protein</topology>
    </subcellularLocation>
</comment>
<comment type="similarity">
    <text evidence="1">Belongs to the OXA1/ALB3/YidC family. Type 1 subfamily.</text>
</comment>
<evidence type="ECO:0000255" key="1">
    <source>
        <dbReference type="HAMAP-Rule" id="MF_01810"/>
    </source>
</evidence>
<protein>
    <recommendedName>
        <fullName evidence="1">Membrane protein insertase YidC</fullName>
    </recommendedName>
    <alternativeName>
        <fullName evidence="1">Foldase YidC</fullName>
    </alternativeName>
    <alternativeName>
        <fullName evidence="1">Membrane integrase YidC</fullName>
    </alternativeName>
    <alternativeName>
        <fullName evidence="1">Membrane protein YidC</fullName>
    </alternativeName>
</protein>
<gene>
    <name evidence="1" type="primary">yidC</name>
    <name type="ordered locus">ASA_4382</name>
</gene>
<accession>A4STS5</accession>
<reference key="1">
    <citation type="journal article" date="2008" name="BMC Genomics">
        <title>The genome of Aeromonas salmonicida subsp. salmonicida A449: insights into the evolution of a fish pathogen.</title>
        <authorList>
            <person name="Reith M.E."/>
            <person name="Singh R.K."/>
            <person name="Curtis B."/>
            <person name="Boyd J.M."/>
            <person name="Bouevitch A."/>
            <person name="Kimball J."/>
            <person name="Munholland J."/>
            <person name="Murphy C."/>
            <person name="Sarty D."/>
            <person name="Williams J."/>
            <person name="Nash J.H."/>
            <person name="Johnson S.C."/>
            <person name="Brown L.L."/>
        </authorList>
    </citation>
    <scope>NUCLEOTIDE SEQUENCE [LARGE SCALE GENOMIC DNA]</scope>
    <source>
        <strain>A449</strain>
    </source>
</reference>
<organism>
    <name type="scientific">Aeromonas salmonicida (strain A449)</name>
    <dbReference type="NCBI Taxonomy" id="382245"/>
    <lineage>
        <taxon>Bacteria</taxon>
        <taxon>Pseudomonadati</taxon>
        <taxon>Pseudomonadota</taxon>
        <taxon>Gammaproteobacteria</taxon>
        <taxon>Aeromonadales</taxon>
        <taxon>Aeromonadaceae</taxon>
        <taxon>Aeromonas</taxon>
    </lineage>
</organism>
<sequence length="548" mass="61743">MESQRNLILIGLLFVSFLLWQQWESDKAPKPAPTTVAQTEHFVPEAGQTGDIPQVSEQANANAARKLITVSSDVLKLTLDTQGGDIVSAELLAHKLEEGKDQSFVLLTSQPDRLYVAQSGLVGRDGPDSQAQGRPTYEAAQTSYQLADGQDQVVVPMTWTDSKGVVFTKEFVLKRGDYAIGVDYKIDNKSAEPVQVQFYGQLKQTVTTPKDQEGHAMVASAYRGGAFSSEESRYKKYTFDEMKDADLNKTTKGGWVAMLQHYFVSAWAPNADDTNSFYSRVIPGKDQAIIGYKAPLVDVAAGQQAEVTSKLWVGPKLQDQMAKVANHLDLTVDYGWLWFIAQPLHWLLTVFQGFVHNWGVAIIMLTLLVRGIMFPLTKAQYTSMAKMRMLQPKLAALKERFSDDRQKMSQGMMELYKKEKVNPLGGCLPILVQMPIFIALYWALMESVELRHAPFALWITDLSVKDPFFVLPILMGASMWYLQKMSPTTITDPMQQKVMQFMPIIFTFMFLWFPAGLTLYWLVSNVISITQQTIIYRQLEKKGLHTRT</sequence>
<name>YIDC_AERS4</name>
<feature type="chain" id="PRO_1000070052" description="Membrane protein insertase YidC">
    <location>
        <begin position="1"/>
        <end position="548"/>
    </location>
</feature>
<feature type="transmembrane region" description="Helical" evidence="1">
    <location>
        <begin position="6"/>
        <end position="26"/>
    </location>
</feature>
<feature type="transmembrane region" description="Helical" evidence="1">
    <location>
        <begin position="349"/>
        <end position="369"/>
    </location>
</feature>
<feature type="transmembrane region" description="Helical" evidence="1">
    <location>
        <begin position="424"/>
        <end position="444"/>
    </location>
</feature>
<feature type="transmembrane region" description="Helical" evidence="1">
    <location>
        <begin position="455"/>
        <end position="475"/>
    </location>
</feature>
<feature type="transmembrane region" description="Helical" evidence="1">
    <location>
        <begin position="503"/>
        <end position="523"/>
    </location>
</feature>